<comment type="function">
    <text evidence="1 2">Negative regulator of the paaZ and paaABCDEFGHIJK catabolic operons. Binds the consensus sequence 5'-WWTRTGATTCGYGWT-3'. Binding of PaaX is specifically inhibited by phenylacetyl-coenzyme A (PA-CoA).</text>
</comment>
<comment type="pathway">
    <text>Aromatic compound metabolism; phenylacetate degradation.</text>
</comment>
<comment type="interaction">
    <interactant intactId="EBI-544692">
        <id>P76086</id>
    </interactant>
    <interactant intactId="EBI-9141330">
        <id>P0AE82</id>
        <label>cpxA</label>
    </interactant>
    <organismsDiffer>false</organismsDiffer>
    <experiments>3</experiments>
</comment>
<comment type="interaction">
    <interactant intactId="EBI-544692">
        <id>P76086</id>
    </interactant>
    <interactant intactId="EBI-1129978">
        <id>P41443</id>
        <label>gspH</label>
    </interactant>
    <organismsDiffer>false</organismsDiffer>
    <experiments>2</experiments>
</comment>
<comment type="similarity">
    <text evidence="3">Belongs to the PaaX family.</text>
</comment>
<gene>
    <name type="primary">paaX</name>
    <name type="synonym">ydbY</name>
    <name type="ordered locus">b1399</name>
    <name type="ordered locus">JW1394</name>
</gene>
<proteinExistence type="evidence at protein level"/>
<organism>
    <name type="scientific">Escherichia coli (strain K12)</name>
    <dbReference type="NCBI Taxonomy" id="83333"/>
    <lineage>
        <taxon>Bacteria</taxon>
        <taxon>Pseudomonadati</taxon>
        <taxon>Pseudomonadota</taxon>
        <taxon>Gammaproteobacteria</taxon>
        <taxon>Enterobacterales</taxon>
        <taxon>Enterobacteriaceae</taxon>
        <taxon>Escherichia</taxon>
    </lineage>
</organism>
<keyword id="KW-0002">3D-structure</keyword>
<keyword id="KW-0238">DNA-binding</keyword>
<keyword id="KW-1185">Reference proteome</keyword>
<keyword id="KW-0678">Repressor</keyword>
<keyword id="KW-0804">Transcription</keyword>
<keyword id="KW-0805">Transcription regulation</keyword>
<protein>
    <recommendedName>
        <fullName>Transcriptional repressor PaaX</fullName>
    </recommendedName>
</protein>
<name>PAAX_ECOLI</name>
<dbReference type="EMBL" id="X97452">
    <property type="protein sequence ID" value="CAA66101.1"/>
    <property type="molecule type" value="Genomic_DNA"/>
</dbReference>
<dbReference type="EMBL" id="U00096">
    <property type="protein sequence ID" value="AAC74481.1"/>
    <property type="molecule type" value="Genomic_DNA"/>
</dbReference>
<dbReference type="EMBL" id="AP009048">
    <property type="protein sequence ID" value="BAE76429.1"/>
    <property type="molecule type" value="Genomic_DNA"/>
</dbReference>
<dbReference type="PIR" id="B64891">
    <property type="entry name" value="B64891"/>
</dbReference>
<dbReference type="RefSeq" id="NP_415917.1">
    <property type="nucleotide sequence ID" value="NC_000913.3"/>
</dbReference>
<dbReference type="RefSeq" id="WP_000039887.1">
    <property type="nucleotide sequence ID" value="NZ_SSZK01000012.1"/>
</dbReference>
<dbReference type="PDB" id="8A39">
    <property type="method" value="X-ray"/>
    <property type="resolution" value="2.30 A"/>
    <property type="chains" value="AP1/BP1/CP1=1-316"/>
</dbReference>
<dbReference type="PDBsum" id="8A39"/>
<dbReference type="SMR" id="P76086"/>
<dbReference type="BioGRID" id="4263014">
    <property type="interactions" value="115"/>
</dbReference>
<dbReference type="BioGRID" id="850329">
    <property type="interactions" value="6"/>
</dbReference>
<dbReference type="DIP" id="DIP-10431N"/>
<dbReference type="FunCoup" id="P76086">
    <property type="interactions" value="69"/>
</dbReference>
<dbReference type="IntAct" id="P76086">
    <property type="interactions" value="21"/>
</dbReference>
<dbReference type="STRING" id="511145.b1399"/>
<dbReference type="jPOST" id="P76086"/>
<dbReference type="PaxDb" id="511145-b1399"/>
<dbReference type="EnsemblBacteria" id="AAC74481">
    <property type="protein sequence ID" value="AAC74481"/>
    <property type="gene ID" value="b1399"/>
</dbReference>
<dbReference type="GeneID" id="945966"/>
<dbReference type="KEGG" id="ecj:JW1394"/>
<dbReference type="KEGG" id="eco:b1399"/>
<dbReference type="KEGG" id="ecoc:C3026_08160"/>
<dbReference type="PATRIC" id="fig|1411691.4.peg.872"/>
<dbReference type="EchoBASE" id="EB3509"/>
<dbReference type="eggNOG" id="COG3327">
    <property type="taxonomic scope" value="Bacteria"/>
</dbReference>
<dbReference type="HOGENOM" id="CLU_067515_0_0_6"/>
<dbReference type="InParanoid" id="P76086"/>
<dbReference type="OMA" id="LLIHEYR"/>
<dbReference type="OrthoDB" id="2270427at2"/>
<dbReference type="PhylomeDB" id="P76086"/>
<dbReference type="BioCyc" id="EcoCyc:G6720-MONOMER"/>
<dbReference type="UniPathway" id="UPA00930"/>
<dbReference type="PRO" id="PR:P76086"/>
<dbReference type="Proteomes" id="UP000000625">
    <property type="component" value="Chromosome"/>
</dbReference>
<dbReference type="GO" id="GO:0000976">
    <property type="term" value="F:transcription cis-regulatory region binding"/>
    <property type="evidence" value="ECO:0000314"/>
    <property type="project" value="EcoCyc"/>
</dbReference>
<dbReference type="GO" id="GO:0006351">
    <property type="term" value="P:DNA-templated transcription"/>
    <property type="evidence" value="ECO:0000314"/>
    <property type="project" value="EcoCyc"/>
</dbReference>
<dbReference type="GO" id="GO:2000143">
    <property type="term" value="P:negative regulation of DNA-templated transcription initiation"/>
    <property type="evidence" value="ECO:0000315"/>
    <property type="project" value="EcoCyc"/>
</dbReference>
<dbReference type="GO" id="GO:0010124">
    <property type="term" value="P:phenylacetate catabolic process"/>
    <property type="evidence" value="ECO:0000315"/>
    <property type="project" value="UniProtKB"/>
</dbReference>
<dbReference type="FunFam" id="1.10.10.10:FF:000500">
    <property type="entry name" value="Phenylacetic acid degradation operon negative regulatory protein"/>
    <property type="match status" value="1"/>
</dbReference>
<dbReference type="Gene3D" id="1.20.58.1460">
    <property type="match status" value="1"/>
</dbReference>
<dbReference type="Gene3D" id="1.10.10.10">
    <property type="entry name" value="Winged helix-like DNA-binding domain superfamily/Winged helix DNA-binding domain"/>
    <property type="match status" value="1"/>
</dbReference>
<dbReference type="InterPro" id="IPR048846">
    <property type="entry name" value="PaaX-like_central"/>
</dbReference>
<dbReference type="InterPro" id="IPR012906">
    <property type="entry name" value="PaaX-like_N"/>
</dbReference>
<dbReference type="InterPro" id="IPR013225">
    <property type="entry name" value="PaaX_C"/>
</dbReference>
<dbReference type="InterPro" id="IPR011965">
    <property type="entry name" value="PaaX_trns_reg"/>
</dbReference>
<dbReference type="InterPro" id="IPR036388">
    <property type="entry name" value="WH-like_DNA-bd_sf"/>
</dbReference>
<dbReference type="NCBIfam" id="TIGR02277">
    <property type="entry name" value="PaaX_trns_reg"/>
    <property type="match status" value="1"/>
</dbReference>
<dbReference type="PANTHER" id="PTHR30319">
    <property type="entry name" value="PHENYLACETIC ACID REGULATOR-RELATED TRANSCRIPTIONAL REPRESSOR"/>
    <property type="match status" value="1"/>
</dbReference>
<dbReference type="PANTHER" id="PTHR30319:SF1">
    <property type="entry name" value="TRANSCRIPTIONAL REPRESSOR PAAX"/>
    <property type="match status" value="1"/>
</dbReference>
<dbReference type="Pfam" id="PF07848">
    <property type="entry name" value="PaaX"/>
    <property type="match status" value="1"/>
</dbReference>
<dbReference type="Pfam" id="PF08223">
    <property type="entry name" value="PaaX_C"/>
    <property type="match status" value="1"/>
</dbReference>
<dbReference type="Pfam" id="PF20803">
    <property type="entry name" value="PaaX_M"/>
    <property type="match status" value="1"/>
</dbReference>
<dbReference type="PIRSF" id="PIRSF020623">
    <property type="entry name" value="PaaX"/>
    <property type="match status" value="1"/>
</dbReference>
<sequence length="316" mass="35295">MSKLDTFIQHAVNAVPVSGTSLISSLYGDSLSHRGGEIWLGSLAALLEGLGFGERFVRTALFRLNKEGWLDVSRIGRRSFYSLSDKGLRLTRRAESKIYRAEQPAWDGKWLLLLSEGLDKSTLADVKKQLIWQGFGALAPSLMASPSQKLADVQTLLHEAGVADNVICFEAQIPLALSRAALRARVEECWHLTEQNAMYETFIQSFRPLVPLLKEAADELTPERAFHIQLLLIHFYRRVVLKDPLLPEELLPAHWAGHTARQLCINIYQRVAPAALAFVSEKGETSVGELPAPGSLYFQRFGGLNIEQEALCQFIR</sequence>
<accession>P76086</accession>
<accession>O53019</accession>
<accession>Q2MBC7</accession>
<reference key="1">
    <citation type="journal article" date="1998" name="J. Biol. Chem.">
        <title>Catabolism of phenylacetic acid in Escherichia coli. Characterization of a new aerobic hybrid pathway.</title>
        <authorList>
            <person name="Ferrandez A."/>
            <person name="Minambres B."/>
            <person name="Garcia B."/>
            <person name="Olivera E.R."/>
            <person name="Luengo J.M."/>
            <person name="Garcia J.L."/>
            <person name="Diaz E."/>
        </authorList>
    </citation>
    <scope>NUCLEOTIDE SEQUENCE [GENOMIC DNA]</scope>
    <scope>FUNCTION IN PHENYLACETATE CATABOLISM</scope>
    <source>
        <strain>W / ATCC 11105 / DSM 1900</strain>
    </source>
</reference>
<reference key="2">
    <citation type="journal article" date="1997" name="Science">
        <title>The complete genome sequence of Escherichia coli K-12.</title>
        <authorList>
            <person name="Blattner F.R."/>
            <person name="Plunkett G. III"/>
            <person name="Bloch C.A."/>
            <person name="Perna N.T."/>
            <person name="Burland V."/>
            <person name="Riley M."/>
            <person name="Collado-Vides J."/>
            <person name="Glasner J.D."/>
            <person name="Rode C.K."/>
            <person name="Mayhew G.F."/>
            <person name="Gregor J."/>
            <person name="Davis N.W."/>
            <person name="Kirkpatrick H.A."/>
            <person name="Goeden M.A."/>
            <person name="Rose D.J."/>
            <person name="Mau B."/>
            <person name="Shao Y."/>
        </authorList>
    </citation>
    <scope>NUCLEOTIDE SEQUENCE [LARGE SCALE GENOMIC DNA]</scope>
    <source>
        <strain>K12 / MG1655 / ATCC 47076</strain>
    </source>
</reference>
<reference key="3">
    <citation type="journal article" date="2006" name="Mol. Syst. Biol.">
        <title>Highly accurate genome sequences of Escherichia coli K-12 strains MG1655 and W3110.</title>
        <authorList>
            <person name="Hayashi K."/>
            <person name="Morooka N."/>
            <person name="Yamamoto Y."/>
            <person name="Fujita K."/>
            <person name="Isono K."/>
            <person name="Choi S."/>
            <person name="Ohtsubo E."/>
            <person name="Baba T."/>
            <person name="Wanner B.L."/>
            <person name="Mori H."/>
            <person name="Horiuchi T."/>
        </authorList>
    </citation>
    <scope>NUCLEOTIDE SEQUENCE [LARGE SCALE GENOMIC DNA]</scope>
    <source>
        <strain>K12 / W3110 / ATCC 27325 / DSM 5911</strain>
    </source>
</reference>
<reference key="4">
    <citation type="journal article" date="2000" name="J. Biol. Chem.">
        <title>Transcriptional regulation of the divergent paa catabolic operons for phenylacetic acid degradation in Escherichia coli.</title>
        <authorList>
            <person name="Ferrandez A."/>
            <person name="Garcia J.L."/>
            <person name="Diaz E."/>
        </authorList>
    </citation>
    <scope>FUNCTION AS A TRANSCRIPTIONAL REPRESSOR</scope>
    <scope>REGULATION BY PA-COA</scope>
    <scope>CONSENSUS MOTIF</scope>
</reference>
<feature type="chain" id="PRO_0000058165" description="Transcriptional repressor PaaX">
    <location>
        <begin position="1"/>
        <end position="316"/>
    </location>
</feature>
<feature type="sequence variant" description="In strain: W.">
    <original>D</original>
    <variation>V</variation>
    <location>
        <position position="5"/>
    </location>
</feature>
<feature type="sequence variant" description="In strain: W.">
    <original>L</original>
    <variation>I</variation>
    <location>
        <position position="311"/>
    </location>
</feature>
<feature type="sequence variant" description="In strain: W.">
    <original>I</original>
    <variation>T</variation>
    <location>
        <position position="315"/>
    </location>
</feature>
<evidence type="ECO:0000269" key="1">
    <source>
    </source>
</evidence>
<evidence type="ECO:0000269" key="2">
    <source>
    </source>
</evidence>
<evidence type="ECO:0000305" key="3"/>